<proteinExistence type="predicted"/>
<comment type="similarity">
    <text evidence="1">To B.subtilis YqcE.</text>
</comment>
<organism>
    <name type="scientific">Bacillus subtilis (strain 168)</name>
    <dbReference type="NCBI Taxonomy" id="224308"/>
    <lineage>
        <taxon>Bacteria</taxon>
        <taxon>Bacillati</taxon>
        <taxon>Bacillota</taxon>
        <taxon>Bacilli</taxon>
        <taxon>Bacillales</taxon>
        <taxon>Bacillaceae</taxon>
        <taxon>Bacillus</taxon>
    </lineage>
</organism>
<accession>P54343</accession>
<keyword id="KW-1185">Reference proteome</keyword>
<gene>
    <name type="primary">xkdX</name>
    <name type="ordered locus">BSU12770</name>
</gene>
<name>XKDX_BACSU</name>
<feature type="chain" id="PRO_0000066036" description="Phage-like element PBSX protein XkdX">
    <location>
        <begin position="1"/>
        <end position="54"/>
    </location>
</feature>
<sequence length="54" mass="6239">MNYWVLALYYEWATTDMVKQALAYEDCSIQDLAEGVNKKLITADQYKEITGKAM</sequence>
<evidence type="ECO:0000305" key="1"/>
<dbReference type="EMBL" id="Z70177">
    <property type="protein sequence ID" value="CAA94045.1"/>
    <property type="molecule type" value="Genomic_DNA"/>
</dbReference>
<dbReference type="EMBL" id="AL009126">
    <property type="protein sequence ID" value="CAB13134.1"/>
    <property type="molecule type" value="Genomic_DNA"/>
</dbReference>
<dbReference type="EMBL" id="Z36941">
    <property type="status" value="NOT_ANNOTATED_CDS"/>
    <property type="molecule type" value="Genomic_DNA"/>
</dbReference>
<dbReference type="PIR" id="G69733">
    <property type="entry name" value="G69733"/>
</dbReference>
<dbReference type="RefSeq" id="NP_389160.1">
    <property type="nucleotide sequence ID" value="NC_000964.3"/>
</dbReference>
<dbReference type="RefSeq" id="WP_003232658.1">
    <property type="nucleotide sequence ID" value="NZ_OZ025638.1"/>
</dbReference>
<dbReference type="SMR" id="P54343"/>
<dbReference type="FunCoup" id="P54343">
    <property type="interactions" value="47"/>
</dbReference>
<dbReference type="STRING" id="224308.BSU12770"/>
<dbReference type="PaxDb" id="224308-BSU12770"/>
<dbReference type="EnsemblBacteria" id="CAB13134">
    <property type="protein sequence ID" value="CAB13134"/>
    <property type="gene ID" value="BSU_12770"/>
</dbReference>
<dbReference type="GeneID" id="939941"/>
<dbReference type="KEGG" id="bsu:BSU12770"/>
<dbReference type="PATRIC" id="fig|224308.179.peg.1385"/>
<dbReference type="eggNOG" id="ENOG5030D3R">
    <property type="taxonomic scope" value="Bacteria"/>
</dbReference>
<dbReference type="InParanoid" id="P54343"/>
<dbReference type="OrthoDB" id="2891646at2"/>
<dbReference type="PhylomeDB" id="P54343"/>
<dbReference type="BioCyc" id="BSUB:BSU12770-MONOMER"/>
<dbReference type="Proteomes" id="UP000001570">
    <property type="component" value="Chromosome"/>
</dbReference>
<dbReference type="InterPro" id="IPR010022">
    <property type="entry name" value="XkdX"/>
</dbReference>
<dbReference type="NCBIfam" id="TIGR01669">
    <property type="entry name" value="phage_XkdX"/>
    <property type="match status" value="1"/>
</dbReference>
<dbReference type="Pfam" id="PF09693">
    <property type="entry name" value="Phage_XkdX"/>
    <property type="match status" value="1"/>
</dbReference>
<reference key="1">
    <citation type="submission" date="1996-03" db="EMBL/GenBank/DDBJ databases">
        <authorList>
            <person name="Krogh S."/>
            <person name="O'Reilly M."/>
            <person name="Nolan N."/>
            <person name="Devine K.M."/>
        </authorList>
    </citation>
    <scope>NUCLEOTIDE SEQUENCE [GENOMIC DNA]</scope>
    <source>
        <strain>168</strain>
    </source>
</reference>
<reference key="2">
    <citation type="journal article" date="1997" name="Nature">
        <title>The complete genome sequence of the Gram-positive bacterium Bacillus subtilis.</title>
        <authorList>
            <person name="Kunst F."/>
            <person name="Ogasawara N."/>
            <person name="Moszer I."/>
            <person name="Albertini A.M."/>
            <person name="Alloni G."/>
            <person name="Azevedo V."/>
            <person name="Bertero M.G."/>
            <person name="Bessieres P."/>
            <person name="Bolotin A."/>
            <person name="Borchert S."/>
            <person name="Borriss R."/>
            <person name="Boursier L."/>
            <person name="Brans A."/>
            <person name="Braun M."/>
            <person name="Brignell S.C."/>
            <person name="Bron S."/>
            <person name="Brouillet S."/>
            <person name="Bruschi C.V."/>
            <person name="Caldwell B."/>
            <person name="Capuano V."/>
            <person name="Carter N.M."/>
            <person name="Choi S.-K."/>
            <person name="Codani J.-J."/>
            <person name="Connerton I.F."/>
            <person name="Cummings N.J."/>
            <person name="Daniel R.A."/>
            <person name="Denizot F."/>
            <person name="Devine K.M."/>
            <person name="Duesterhoeft A."/>
            <person name="Ehrlich S.D."/>
            <person name="Emmerson P.T."/>
            <person name="Entian K.-D."/>
            <person name="Errington J."/>
            <person name="Fabret C."/>
            <person name="Ferrari E."/>
            <person name="Foulger D."/>
            <person name="Fritz C."/>
            <person name="Fujita M."/>
            <person name="Fujita Y."/>
            <person name="Fuma S."/>
            <person name="Galizzi A."/>
            <person name="Galleron N."/>
            <person name="Ghim S.-Y."/>
            <person name="Glaser P."/>
            <person name="Goffeau A."/>
            <person name="Golightly E.J."/>
            <person name="Grandi G."/>
            <person name="Guiseppi G."/>
            <person name="Guy B.J."/>
            <person name="Haga K."/>
            <person name="Haiech J."/>
            <person name="Harwood C.R."/>
            <person name="Henaut A."/>
            <person name="Hilbert H."/>
            <person name="Holsappel S."/>
            <person name="Hosono S."/>
            <person name="Hullo M.-F."/>
            <person name="Itaya M."/>
            <person name="Jones L.-M."/>
            <person name="Joris B."/>
            <person name="Karamata D."/>
            <person name="Kasahara Y."/>
            <person name="Klaerr-Blanchard M."/>
            <person name="Klein C."/>
            <person name="Kobayashi Y."/>
            <person name="Koetter P."/>
            <person name="Koningstein G."/>
            <person name="Krogh S."/>
            <person name="Kumano M."/>
            <person name="Kurita K."/>
            <person name="Lapidus A."/>
            <person name="Lardinois S."/>
            <person name="Lauber J."/>
            <person name="Lazarevic V."/>
            <person name="Lee S.-M."/>
            <person name="Levine A."/>
            <person name="Liu H."/>
            <person name="Masuda S."/>
            <person name="Mauel C."/>
            <person name="Medigue C."/>
            <person name="Medina N."/>
            <person name="Mellado R.P."/>
            <person name="Mizuno M."/>
            <person name="Moestl D."/>
            <person name="Nakai S."/>
            <person name="Noback M."/>
            <person name="Noone D."/>
            <person name="O'Reilly M."/>
            <person name="Ogawa K."/>
            <person name="Ogiwara A."/>
            <person name="Oudega B."/>
            <person name="Park S.-H."/>
            <person name="Parro V."/>
            <person name="Pohl T.M."/>
            <person name="Portetelle D."/>
            <person name="Porwollik S."/>
            <person name="Prescott A.M."/>
            <person name="Presecan E."/>
            <person name="Pujic P."/>
            <person name="Purnelle B."/>
            <person name="Rapoport G."/>
            <person name="Rey M."/>
            <person name="Reynolds S."/>
            <person name="Rieger M."/>
            <person name="Rivolta C."/>
            <person name="Rocha E."/>
            <person name="Roche B."/>
            <person name="Rose M."/>
            <person name="Sadaie Y."/>
            <person name="Sato T."/>
            <person name="Scanlan E."/>
            <person name="Schleich S."/>
            <person name="Schroeter R."/>
            <person name="Scoffone F."/>
            <person name="Sekiguchi J."/>
            <person name="Sekowska A."/>
            <person name="Seror S.J."/>
            <person name="Serror P."/>
            <person name="Shin B.-S."/>
            <person name="Soldo B."/>
            <person name="Sorokin A."/>
            <person name="Tacconi E."/>
            <person name="Takagi T."/>
            <person name="Takahashi H."/>
            <person name="Takemaru K."/>
            <person name="Takeuchi M."/>
            <person name="Tamakoshi A."/>
            <person name="Tanaka T."/>
            <person name="Terpstra P."/>
            <person name="Tognoni A."/>
            <person name="Tosato V."/>
            <person name="Uchiyama S."/>
            <person name="Vandenbol M."/>
            <person name="Vannier F."/>
            <person name="Vassarotti A."/>
            <person name="Viari A."/>
            <person name="Wambutt R."/>
            <person name="Wedler E."/>
            <person name="Wedler H."/>
            <person name="Weitzenegger T."/>
            <person name="Winters P."/>
            <person name="Wipat A."/>
            <person name="Yamamoto H."/>
            <person name="Yamane K."/>
            <person name="Yasumoto K."/>
            <person name="Yata K."/>
            <person name="Yoshida K."/>
            <person name="Yoshikawa H.-F."/>
            <person name="Zumstein E."/>
            <person name="Yoshikawa H."/>
            <person name="Danchin A."/>
        </authorList>
    </citation>
    <scope>NUCLEOTIDE SEQUENCE [LARGE SCALE GENOMIC DNA]</scope>
    <source>
        <strain>168</strain>
    </source>
</reference>
<reference key="3">
    <citation type="submission" date="1994-09" db="EMBL/GenBank/DDBJ databases">
        <authorList>
            <person name="Krogh S."/>
            <person name="Joergensen S.T."/>
            <person name="Diderichsen B."/>
            <person name="Devine K.M."/>
        </authorList>
    </citation>
    <scope>NUCLEOTIDE SEQUENCE [GENOMIC DNA] OF 29-54</scope>
    <source>
        <strain>168 / SO113</strain>
    </source>
</reference>
<protein>
    <recommendedName>
        <fullName>Phage-like element PBSX protein XkdX</fullName>
    </recommendedName>
</protein>